<name>Y2190_MYCTU</name>
<keyword id="KW-0002">3D-structure</keyword>
<keyword id="KW-0378">Hydrolase</keyword>
<keyword id="KW-0645">Protease</keyword>
<keyword id="KW-1185">Reference proteome</keyword>
<keyword id="KW-0788">Thiol protease</keyword>
<accession>P9WHU3</accession>
<accession>L0TBK4</accession>
<accession>O53524</accession>
<accession>P67473</accession>
<accession>Q10383</accession>
<feature type="chain" id="PRO_0000109873" description="Probable endopeptidase Rv2190c">
    <location>
        <begin position="1"/>
        <end position="385"/>
    </location>
</feature>
<feature type="domain" description="NlpC/P60" evidence="1">
    <location>
        <begin position="270"/>
        <end position="385"/>
    </location>
</feature>
<feature type="region of interest" description="Disordered" evidence="2">
    <location>
        <begin position="235"/>
        <end position="268"/>
    </location>
</feature>
<feature type="compositionally biased region" description="Pro residues" evidence="2">
    <location>
        <begin position="235"/>
        <end position="257"/>
    </location>
</feature>
<feature type="active site" description="Nucleophile" evidence="1">
    <location>
        <position position="300"/>
    </location>
</feature>
<feature type="active site" description="Proton acceptor" evidence="1">
    <location>
        <position position="348"/>
    </location>
</feature>
<feature type="active site" evidence="1">
    <location>
        <position position="360"/>
    </location>
</feature>
<dbReference type="EC" id="3.4.-.-"/>
<dbReference type="EMBL" id="AL123456">
    <property type="protein sequence ID" value="CCP44967.1"/>
    <property type="molecule type" value="Genomic_DNA"/>
</dbReference>
<dbReference type="PIR" id="H70937">
    <property type="entry name" value="H70937"/>
</dbReference>
<dbReference type="RefSeq" id="NP_216706.1">
    <property type="nucleotide sequence ID" value="NC_000962.3"/>
</dbReference>
<dbReference type="PDB" id="8IDC">
    <property type="method" value="EM"/>
    <property type="resolution" value="3.90 A"/>
    <property type="chains" value="E=1-385"/>
</dbReference>
<dbReference type="PDB" id="8IDD">
    <property type="method" value="EM"/>
    <property type="resolution" value="4.00 A"/>
    <property type="chains" value="E=1-385"/>
</dbReference>
<dbReference type="PDB" id="8IGQ">
    <property type="method" value="EM"/>
    <property type="resolution" value="5.70 A"/>
    <property type="chains" value="E=1-385"/>
</dbReference>
<dbReference type="PDB" id="8JIA">
    <property type="method" value="EM"/>
    <property type="resolution" value="3.90 A"/>
    <property type="chains" value="E=1-385"/>
</dbReference>
<dbReference type="PDBsum" id="8IDC"/>
<dbReference type="PDBsum" id="8IDD"/>
<dbReference type="PDBsum" id="8IGQ"/>
<dbReference type="PDBsum" id="8JIA"/>
<dbReference type="SMR" id="P9WHU3"/>
<dbReference type="STRING" id="83332.Rv2190c"/>
<dbReference type="PaxDb" id="83332-Rv2190c"/>
<dbReference type="DNASU" id="888670"/>
<dbReference type="GeneID" id="888670"/>
<dbReference type="KEGG" id="mtu:Rv2190c"/>
<dbReference type="KEGG" id="mtv:RVBD_2190c"/>
<dbReference type="TubercuList" id="Rv2190c"/>
<dbReference type="eggNOG" id="COG0791">
    <property type="taxonomic scope" value="Bacteria"/>
</dbReference>
<dbReference type="InParanoid" id="P9WHU3"/>
<dbReference type="OrthoDB" id="5177647at2"/>
<dbReference type="Proteomes" id="UP000001584">
    <property type="component" value="Chromosome"/>
</dbReference>
<dbReference type="GO" id="GO:0005576">
    <property type="term" value="C:extracellular region"/>
    <property type="evidence" value="ECO:0007005"/>
    <property type="project" value="MTBBASE"/>
</dbReference>
<dbReference type="GO" id="GO:0009274">
    <property type="term" value="C:peptidoglycan-based cell wall"/>
    <property type="evidence" value="ECO:0000318"/>
    <property type="project" value="GO_Central"/>
</dbReference>
<dbReference type="GO" id="GO:0008234">
    <property type="term" value="F:cysteine-type peptidase activity"/>
    <property type="evidence" value="ECO:0007669"/>
    <property type="project" value="UniProtKB-KW"/>
</dbReference>
<dbReference type="GO" id="GO:0008745">
    <property type="term" value="F:N-acetylmuramoyl-L-alanine amidase activity"/>
    <property type="evidence" value="ECO:0000318"/>
    <property type="project" value="GO_Central"/>
</dbReference>
<dbReference type="GO" id="GO:0071554">
    <property type="term" value="P:cell wall organization or biogenesis"/>
    <property type="evidence" value="ECO:0000318"/>
    <property type="project" value="GO_Central"/>
</dbReference>
<dbReference type="GO" id="GO:0006508">
    <property type="term" value="P:proteolysis"/>
    <property type="evidence" value="ECO:0007669"/>
    <property type="project" value="UniProtKB-KW"/>
</dbReference>
<dbReference type="Gene3D" id="6.10.250.3150">
    <property type="match status" value="1"/>
</dbReference>
<dbReference type="Gene3D" id="3.90.1720.10">
    <property type="entry name" value="endopeptidase domain like (from Nostoc punctiforme)"/>
    <property type="match status" value="1"/>
</dbReference>
<dbReference type="InterPro" id="IPR000064">
    <property type="entry name" value="NLP_P60_dom"/>
</dbReference>
<dbReference type="InterPro" id="IPR038765">
    <property type="entry name" value="Papain-like_cys_pep_sf"/>
</dbReference>
<dbReference type="InterPro" id="IPR051794">
    <property type="entry name" value="PG_Endopeptidase_C40"/>
</dbReference>
<dbReference type="NCBIfam" id="NF038345">
    <property type="entry name" value="wall_hydro_RipC"/>
    <property type="match status" value="1"/>
</dbReference>
<dbReference type="PANTHER" id="PTHR47359:SF3">
    <property type="entry name" value="NLP_P60 DOMAIN-CONTAINING PROTEIN-RELATED"/>
    <property type="match status" value="1"/>
</dbReference>
<dbReference type="PANTHER" id="PTHR47359">
    <property type="entry name" value="PEPTIDOGLYCAN DL-ENDOPEPTIDASE CWLO"/>
    <property type="match status" value="1"/>
</dbReference>
<dbReference type="Pfam" id="PF00877">
    <property type="entry name" value="NLPC_P60"/>
    <property type="match status" value="1"/>
</dbReference>
<dbReference type="SUPFAM" id="SSF54001">
    <property type="entry name" value="Cysteine proteinases"/>
    <property type="match status" value="1"/>
</dbReference>
<dbReference type="PROSITE" id="PS51935">
    <property type="entry name" value="NLPC_P60"/>
    <property type="match status" value="1"/>
</dbReference>
<proteinExistence type="evidence at protein level"/>
<reference key="1">
    <citation type="journal article" date="1998" name="Nature">
        <title>Deciphering the biology of Mycobacterium tuberculosis from the complete genome sequence.</title>
        <authorList>
            <person name="Cole S.T."/>
            <person name="Brosch R."/>
            <person name="Parkhill J."/>
            <person name="Garnier T."/>
            <person name="Churcher C.M."/>
            <person name="Harris D.E."/>
            <person name="Gordon S.V."/>
            <person name="Eiglmeier K."/>
            <person name="Gas S."/>
            <person name="Barry C.E. III"/>
            <person name="Tekaia F."/>
            <person name="Badcock K."/>
            <person name="Basham D."/>
            <person name="Brown D."/>
            <person name="Chillingworth T."/>
            <person name="Connor R."/>
            <person name="Davies R.M."/>
            <person name="Devlin K."/>
            <person name="Feltwell T."/>
            <person name="Gentles S."/>
            <person name="Hamlin N."/>
            <person name="Holroyd S."/>
            <person name="Hornsby T."/>
            <person name="Jagels K."/>
            <person name="Krogh A."/>
            <person name="McLean J."/>
            <person name="Moule S."/>
            <person name="Murphy L.D."/>
            <person name="Oliver S."/>
            <person name="Osborne J."/>
            <person name="Quail M.A."/>
            <person name="Rajandream M.A."/>
            <person name="Rogers J."/>
            <person name="Rutter S."/>
            <person name="Seeger K."/>
            <person name="Skelton S."/>
            <person name="Squares S."/>
            <person name="Squares R."/>
            <person name="Sulston J.E."/>
            <person name="Taylor K."/>
            <person name="Whitehead S."/>
            <person name="Barrell B.G."/>
        </authorList>
    </citation>
    <scope>NUCLEOTIDE SEQUENCE [LARGE SCALE GENOMIC DNA]</scope>
    <source>
        <strain>ATCC 25618 / H37Rv</strain>
    </source>
</reference>
<protein>
    <recommendedName>
        <fullName>Probable endopeptidase Rv2190c</fullName>
        <ecNumber>3.4.-.-</ecNumber>
    </recommendedName>
</protein>
<sequence>MRLDQRWLIARVIMRSAIGFFASFTVSSGVLAANVLADPADDALAKLNELSRQAEQTTEALHSAQLDLNEKLAAQRAADQKLADNRTALDAARARLATFQTAVNKVAAATYMGGRTHGMDAILTAESPQLLIDRLSVQRVMAHQMSTQMARFKAAGEQAVKAEQAAAKSAADARSAAEQAAAVRANLQHKQSQLQVQIAVVKSQYVALTPEERTALADPGPVPAVAAIAPGAPPAALPPGAPPGDGPAPGVAPPPGGMPGLPFVQPDGAGGDRTAVVQAALTQVGAPYAWGGAAPGGFDCSGLVMWAFQQAGIALPHSSQALAHGGQPVALSDLQPGDVLTFYSDASHAGIYIGDGLMVHSSTYGVPVRVVPMDSSGPIYDARRY</sequence>
<organism>
    <name type="scientific">Mycobacterium tuberculosis (strain ATCC 25618 / H37Rv)</name>
    <dbReference type="NCBI Taxonomy" id="83332"/>
    <lineage>
        <taxon>Bacteria</taxon>
        <taxon>Bacillati</taxon>
        <taxon>Actinomycetota</taxon>
        <taxon>Actinomycetes</taxon>
        <taxon>Mycobacteriales</taxon>
        <taxon>Mycobacteriaceae</taxon>
        <taxon>Mycobacterium</taxon>
        <taxon>Mycobacterium tuberculosis complex</taxon>
    </lineage>
</organism>
<comment type="similarity">
    <text evidence="1 3">Belongs to the peptidase C40 family.</text>
</comment>
<gene>
    <name type="ordered locus">Rv2190c</name>
    <name type="ORF">MTCY190.01c</name>
    <name type="ORF">MTV021.23c</name>
</gene>
<evidence type="ECO:0000255" key="1">
    <source>
        <dbReference type="PROSITE-ProRule" id="PRU01284"/>
    </source>
</evidence>
<evidence type="ECO:0000256" key="2">
    <source>
        <dbReference type="SAM" id="MobiDB-lite"/>
    </source>
</evidence>
<evidence type="ECO:0000305" key="3"/>